<organism>
    <name type="scientific">Lacticaseibacillus paracasei (strain ATCC 334 / BCRC 17002 / CCUG 31169 / CIP 107868 / KCTC 3260 / NRRL B-441)</name>
    <name type="common">Lactobacillus paracasei</name>
    <dbReference type="NCBI Taxonomy" id="321967"/>
    <lineage>
        <taxon>Bacteria</taxon>
        <taxon>Bacillati</taxon>
        <taxon>Bacillota</taxon>
        <taxon>Bacilli</taxon>
        <taxon>Lactobacillales</taxon>
        <taxon>Lactobacillaceae</taxon>
        <taxon>Lacticaseibacillus</taxon>
    </lineage>
</organism>
<name>RL19_LACP3</name>
<protein>
    <recommendedName>
        <fullName evidence="1">Large ribosomal subunit protein bL19</fullName>
    </recommendedName>
    <alternativeName>
        <fullName evidence="2">50S ribosomal protein L19</fullName>
    </alternativeName>
</protein>
<gene>
    <name evidence="1" type="primary">rplS</name>
    <name type="ordered locus">LSEI_1597</name>
</gene>
<evidence type="ECO:0000255" key="1">
    <source>
        <dbReference type="HAMAP-Rule" id="MF_00402"/>
    </source>
</evidence>
<evidence type="ECO:0000305" key="2"/>
<sequence length="115" mass="13377">MNPLIQEITKKQLRDDIPDFRPGDNVRVHAKIVEGERERIQLFEGVVIKRHGVGISATYTVRKISNGVGVERTFPLHSPRVEKIEVTRHGQVRRAKLYYLRALRGKAARIREKRR</sequence>
<dbReference type="EMBL" id="CP000423">
    <property type="protein sequence ID" value="ABJ70371.1"/>
    <property type="molecule type" value="Genomic_DNA"/>
</dbReference>
<dbReference type="RefSeq" id="WP_003564764.1">
    <property type="nucleotide sequence ID" value="NC_008526.1"/>
</dbReference>
<dbReference type="RefSeq" id="YP_806813.1">
    <property type="nucleotide sequence ID" value="NC_008526.1"/>
</dbReference>
<dbReference type="SMR" id="Q038K1"/>
<dbReference type="STRING" id="321967.LSEI_1597"/>
<dbReference type="PaxDb" id="321967-LSEI_1597"/>
<dbReference type="GeneID" id="57090302"/>
<dbReference type="KEGG" id="lca:LSEI_1597"/>
<dbReference type="PATRIC" id="fig|321967.11.peg.1578"/>
<dbReference type="HOGENOM" id="CLU_103507_2_2_9"/>
<dbReference type="Proteomes" id="UP000001651">
    <property type="component" value="Chromosome"/>
</dbReference>
<dbReference type="GO" id="GO:0022625">
    <property type="term" value="C:cytosolic large ribosomal subunit"/>
    <property type="evidence" value="ECO:0007669"/>
    <property type="project" value="TreeGrafter"/>
</dbReference>
<dbReference type="GO" id="GO:0003735">
    <property type="term" value="F:structural constituent of ribosome"/>
    <property type="evidence" value="ECO:0007669"/>
    <property type="project" value="InterPro"/>
</dbReference>
<dbReference type="GO" id="GO:0006412">
    <property type="term" value="P:translation"/>
    <property type="evidence" value="ECO:0007669"/>
    <property type="project" value="UniProtKB-UniRule"/>
</dbReference>
<dbReference type="FunFam" id="2.30.30.790:FF:000001">
    <property type="entry name" value="50S ribosomal protein L19"/>
    <property type="match status" value="1"/>
</dbReference>
<dbReference type="Gene3D" id="2.30.30.790">
    <property type="match status" value="1"/>
</dbReference>
<dbReference type="HAMAP" id="MF_00402">
    <property type="entry name" value="Ribosomal_bL19"/>
    <property type="match status" value="1"/>
</dbReference>
<dbReference type="InterPro" id="IPR001857">
    <property type="entry name" value="Ribosomal_bL19"/>
</dbReference>
<dbReference type="InterPro" id="IPR018257">
    <property type="entry name" value="Ribosomal_bL19_CS"/>
</dbReference>
<dbReference type="InterPro" id="IPR038657">
    <property type="entry name" value="Ribosomal_bL19_sf"/>
</dbReference>
<dbReference type="InterPro" id="IPR008991">
    <property type="entry name" value="Translation_prot_SH3-like_sf"/>
</dbReference>
<dbReference type="NCBIfam" id="TIGR01024">
    <property type="entry name" value="rplS_bact"/>
    <property type="match status" value="1"/>
</dbReference>
<dbReference type="PANTHER" id="PTHR15680:SF9">
    <property type="entry name" value="LARGE RIBOSOMAL SUBUNIT PROTEIN BL19M"/>
    <property type="match status" value="1"/>
</dbReference>
<dbReference type="PANTHER" id="PTHR15680">
    <property type="entry name" value="RIBOSOMAL PROTEIN L19"/>
    <property type="match status" value="1"/>
</dbReference>
<dbReference type="Pfam" id="PF01245">
    <property type="entry name" value="Ribosomal_L19"/>
    <property type="match status" value="1"/>
</dbReference>
<dbReference type="PIRSF" id="PIRSF002191">
    <property type="entry name" value="Ribosomal_L19"/>
    <property type="match status" value="1"/>
</dbReference>
<dbReference type="PRINTS" id="PR00061">
    <property type="entry name" value="RIBOSOMALL19"/>
</dbReference>
<dbReference type="SUPFAM" id="SSF50104">
    <property type="entry name" value="Translation proteins SH3-like domain"/>
    <property type="match status" value="1"/>
</dbReference>
<dbReference type="PROSITE" id="PS01015">
    <property type="entry name" value="RIBOSOMAL_L19"/>
    <property type="match status" value="1"/>
</dbReference>
<reference key="1">
    <citation type="journal article" date="2006" name="Proc. Natl. Acad. Sci. U.S.A.">
        <title>Comparative genomics of the lactic acid bacteria.</title>
        <authorList>
            <person name="Makarova K.S."/>
            <person name="Slesarev A."/>
            <person name="Wolf Y.I."/>
            <person name="Sorokin A."/>
            <person name="Mirkin B."/>
            <person name="Koonin E.V."/>
            <person name="Pavlov A."/>
            <person name="Pavlova N."/>
            <person name="Karamychev V."/>
            <person name="Polouchine N."/>
            <person name="Shakhova V."/>
            <person name="Grigoriev I."/>
            <person name="Lou Y."/>
            <person name="Rohksar D."/>
            <person name="Lucas S."/>
            <person name="Huang K."/>
            <person name="Goodstein D.M."/>
            <person name="Hawkins T."/>
            <person name="Plengvidhya V."/>
            <person name="Welker D."/>
            <person name="Hughes J."/>
            <person name="Goh Y."/>
            <person name="Benson A."/>
            <person name="Baldwin K."/>
            <person name="Lee J.-H."/>
            <person name="Diaz-Muniz I."/>
            <person name="Dosti B."/>
            <person name="Smeianov V."/>
            <person name="Wechter W."/>
            <person name="Barabote R."/>
            <person name="Lorca G."/>
            <person name="Altermann E."/>
            <person name="Barrangou R."/>
            <person name="Ganesan B."/>
            <person name="Xie Y."/>
            <person name="Rawsthorne H."/>
            <person name="Tamir D."/>
            <person name="Parker C."/>
            <person name="Breidt F."/>
            <person name="Broadbent J.R."/>
            <person name="Hutkins R."/>
            <person name="O'Sullivan D."/>
            <person name="Steele J."/>
            <person name="Unlu G."/>
            <person name="Saier M.H. Jr."/>
            <person name="Klaenhammer T."/>
            <person name="Richardson P."/>
            <person name="Kozyavkin S."/>
            <person name="Weimer B.C."/>
            <person name="Mills D.A."/>
        </authorList>
    </citation>
    <scope>NUCLEOTIDE SEQUENCE [LARGE SCALE GENOMIC DNA]</scope>
    <source>
        <strain>ATCC 334 / BCRC 17002 / CCUG 31169 / CIP 107868 / KCTC 3260 / NRRL B-441</strain>
    </source>
</reference>
<comment type="function">
    <text evidence="1">This protein is located at the 30S-50S ribosomal subunit interface and may play a role in the structure and function of the aminoacyl-tRNA binding site.</text>
</comment>
<comment type="similarity">
    <text evidence="1">Belongs to the bacterial ribosomal protein bL19 family.</text>
</comment>
<feature type="chain" id="PRO_1000049691" description="Large ribosomal subunit protein bL19">
    <location>
        <begin position="1"/>
        <end position="115"/>
    </location>
</feature>
<proteinExistence type="inferred from homology"/>
<accession>Q038K1</accession>
<keyword id="KW-1185">Reference proteome</keyword>
<keyword id="KW-0687">Ribonucleoprotein</keyword>
<keyword id="KW-0689">Ribosomal protein</keyword>